<name>MTF1_HUMAN</name>
<organism>
    <name type="scientific">Homo sapiens</name>
    <name type="common">Human</name>
    <dbReference type="NCBI Taxonomy" id="9606"/>
    <lineage>
        <taxon>Eukaryota</taxon>
        <taxon>Metazoa</taxon>
        <taxon>Chordata</taxon>
        <taxon>Craniata</taxon>
        <taxon>Vertebrata</taxon>
        <taxon>Euteleostomi</taxon>
        <taxon>Mammalia</taxon>
        <taxon>Eutheria</taxon>
        <taxon>Euarchontoglires</taxon>
        <taxon>Primates</taxon>
        <taxon>Haplorrhini</taxon>
        <taxon>Catarrhini</taxon>
        <taxon>Hominidae</taxon>
        <taxon>Homo</taxon>
    </lineage>
</organism>
<comment type="function">
    <text evidence="1 5">Zinc-dependent transcriptional regulator of cellular adaption to conditions of exposure to heavy metals (PubMed:8065932). Binds to metal responsive elements (MRE) in promoters and activates the transcription of metallothionein genes like metallothionein-2/MT2A (PubMed:8065932). Also regulates the expression of metalloproteases in response to intracellular zinc and functions as a catabolic regulator of cartilages (By similarity).</text>
</comment>
<comment type="interaction">
    <interactant intactId="EBI-747024">
        <id>Q14872</id>
    </interactant>
    <interactant intactId="EBI-541426">
        <id>Q9BXS5</id>
        <label>AP1M1</label>
    </interactant>
    <organismsDiffer>false</organismsDiffer>
    <experiments>3</experiments>
</comment>
<comment type="subcellular location">
    <subcellularLocation>
        <location evidence="5">Nucleus</location>
    </subcellularLocation>
    <subcellularLocation>
        <location evidence="1">Cytoplasm</location>
    </subcellularLocation>
    <text evidence="1">Translocation to the nucleus is induced by metals.</text>
</comment>
<keyword id="KW-0007">Acetylation</keyword>
<keyword id="KW-0010">Activator</keyword>
<keyword id="KW-0963">Cytoplasm</keyword>
<keyword id="KW-0238">DNA-binding</keyword>
<keyword id="KW-0479">Metal-binding</keyword>
<keyword id="KW-0539">Nucleus</keyword>
<keyword id="KW-0597">Phosphoprotein</keyword>
<keyword id="KW-1267">Proteomics identification</keyword>
<keyword id="KW-1185">Reference proteome</keyword>
<keyword id="KW-0677">Repeat</keyword>
<keyword id="KW-0804">Transcription</keyword>
<keyword id="KW-0805">Transcription regulation</keyword>
<keyword id="KW-0862">Zinc</keyword>
<keyword id="KW-0863">Zinc-finger</keyword>
<feature type="initiator methionine" description="Removed" evidence="1">
    <location>
        <position position="1"/>
    </location>
</feature>
<feature type="chain" id="PRO_0000047220" description="Metal regulatory transcription factor 1">
    <location>
        <begin position="2"/>
        <end position="753"/>
    </location>
</feature>
<feature type="zinc finger region" description="C2H2-type 1" evidence="3">
    <location>
        <begin position="140"/>
        <end position="164"/>
    </location>
</feature>
<feature type="zinc finger region" description="C2H2-type 2" evidence="3">
    <location>
        <begin position="170"/>
        <end position="194"/>
    </location>
</feature>
<feature type="zinc finger region" description="C2H2-type 3" evidence="3">
    <location>
        <begin position="200"/>
        <end position="224"/>
    </location>
</feature>
<feature type="zinc finger region" description="C2H2-type 4" evidence="3">
    <location>
        <begin position="229"/>
        <end position="253"/>
    </location>
</feature>
<feature type="zinc finger region" description="C2H2-type 5" evidence="3">
    <location>
        <begin position="259"/>
        <end position="283"/>
    </location>
</feature>
<feature type="zinc finger region" description="C2H2-type 6" evidence="3">
    <location>
        <begin position="289"/>
        <end position="313"/>
    </location>
</feature>
<feature type="region of interest" description="Disordered" evidence="4">
    <location>
        <begin position="308"/>
        <end position="328"/>
    </location>
</feature>
<feature type="region of interest" description="Disordered" evidence="4">
    <location>
        <begin position="395"/>
        <end position="466"/>
    </location>
</feature>
<feature type="region of interest" description="Disordered" evidence="4">
    <location>
        <begin position="648"/>
        <end position="715"/>
    </location>
</feature>
<feature type="short sequence motif" description="Nuclear localization signal" evidence="2">
    <location>
        <begin position="133"/>
        <end position="138"/>
    </location>
</feature>
<feature type="compositionally biased region" description="Polar residues" evidence="4">
    <location>
        <begin position="408"/>
        <end position="417"/>
    </location>
</feature>
<feature type="compositionally biased region" description="Pro residues" evidence="4">
    <location>
        <begin position="655"/>
        <end position="666"/>
    </location>
</feature>
<feature type="compositionally biased region" description="Low complexity" evidence="4">
    <location>
        <begin position="679"/>
        <end position="698"/>
    </location>
</feature>
<feature type="compositionally biased region" description="Polar residues" evidence="4">
    <location>
        <begin position="700"/>
        <end position="712"/>
    </location>
</feature>
<feature type="modified residue" description="N-acetylglycine" evidence="1">
    <location>
        <position position="2"/>
    </location>
</feature>
<feature type="modified residue" description="Phosphoserine" evidence="1">
    <location>
        <position position="5"/>
    </location>
</feature>
<feature type="modified residue" description="Phosphoserine" evidence="7">
    <location>
        <position position="305"/>
    </location>
</feature>
<feature type="sequence conflict" description="In Ref. 1; CAA55363." evidence="6" ref="1">
    <original>Y</original>
    <variation>H</variation>
    <location>
        <position position="185"/>
    </location>
</feature>
<dbReference type="EMBL" id="X78710">
    <property type="protein sequence ID" value="CAA55363.1"/>
    <property type="molecule type" value="mRNA"/>
</dbReference>
<dbReference type="EMBL" id="AK314233">
    <property type="protein sequence ID" value="BAG36903.1"/>
    <property type="molecule type" value="mRNA"/>
</dbReference>
<dbReference type="EMBL" id="AL929472">
    <property type="status" value="NOT_ANNOTATED_CDS"/>
    <property type="molecule type" value="Genomic_DNA"/>
</dbReference>
<dbReference type="EMBL" id="CH471059">
    <property type="protein sequence ID" value="EAX07312.1"/>
    <property type="molecule type" value="Genomic_DNA"/>
</dbReference>
<dbReference type="EMBL" id="BC014454">
    <property type="protein sequence ID" value="AAH14454.1"/>
    <property type="molecule type" value="mRNA"/>
</dbReference>
<dbReference type="CCDS" id="CCDS30676.1"/>
<dbReference type="PIR" id="S48059">
    <property type="entry name" value="S48059"/>
</dbReference>
<dbReference type="RefSeq" id="NP_005946.2">
    <property type="nucleotide sequence ID" value="NM_005955.3"/>
</dbReference>
<dbReference type="RefSeq" id="XP_011539793.1">
    <property type="nucleotide sequence ID" value="XM_011541491.3"/>
</dbReference>
<dbReference type="RefSeq" id="XP_047277126.1">
    <property type="nucleotide sequence ID" value="XM_047421170.1"/>
</dbReference>
<dbReference type="RefSeq" id="XP_054192672.1">
    <property type="nucleotide sequence ID" value="XM_054336697.1"/>
</dbReference>
<dbReference type="SMR" id="Q14872"/>
<dbReference type="BioGRID" id="110620">
    <property type="interactions" value="116"/>
</dbReference>
<dbReference type="FunCoup" id="Q14872">
    <property type="interactions" value="2695"/>
</dbReference>
<dbReference type="IntAct" id="Q14872">
    <property type="interactions" value="1"/>
</dbReference>
<dbReference type="STRING" id="9606.ENSP00000362127"/>
<dbReference type="DrugBank" id="DB09130">
    <property type="generic name" value="Copper"/>
</dbReference>
<dbReference type="DrugBank" id="DB12965">
    <property type="generic name" value="Silver"/>
</dbReference>
<dbReference type="GlyGen" id="Q14872">
    <property type="glycosylation" value="2 sites, 1 O-linked glycan (1 site)"/>
</dbReference>
<dbReference type="iPTMnet" id="Q14872"/>
<dbReference type="PhosphoSitePlus" id="Q14872"/>
<dbReference type="BioMuta" id="MTF1"/>
<dbReference type="DMDM" id="68052403"/>
<dbReference type="jPOST" id="Q14872"/>
<dbReference type="MassIVE" id="Q14872"/>
<dbReference type="PaxDb" id="9606-ENSP00000362127"/>
<dbReference type="PeptideAtlas" id="Q14872"/>
<dbReference type="ProteomicsDB" id="60214"/>
<dbReference type="Antibodypedia" id="17617">
    <property type="antibodies" value="235 antibodies from 29 providers"/>
</dbReference>
<dbReference type="DNASU" id="4520"/>
<dbReference type="Ensembl" id="ENST00000373036.5">
    <property type="protein sequence ID" value="ENSP00000362127.3"/>
    <property type="gene ID" value="ENSG00000188786.10"/>
</dbReference>
<dbReference type="GeneID" id="4520"/>
<dbReference type="KEGG" id="hsa:4520"/>
<dbReference type="MANE-Select" id="ENST00000373036.5">
    <property type="protein sequence ID" value="ENSP00000362127.3"/>
    <property type="RefSeq nucleotide sequence ID" value="NM_005955.3"/>
    <property type="RefSeq protein sequence ID" value="NP_005946.2"/>
</dbReference>
<dbReference type="UCSC" id="uc001cce.1">
    <property type="organism name" value="human"/>
</dbReference>
<dbReference type="AGR" id="HGNC:7428"/>
<dbReference type="CTD" id="4520"/>
<dbReference type="DisGeNET" id="4520"/>
<dbReference type="GeneCards" id="MTF1"/>
<dbReference type="HGNC" id="HGNC:7428">
    <property type="gene designation" value="MTF1"/>
</dbReference>
<dbReference type="HPA" id="ENSG00000188786">
    <property type="expression patterns" value="Tissue enhanced (bone)"/>
</dbReference>
<dbReference type="MIM" id="600172">
    <property type="type" value="gene"/>
</dbReference>
<dbReference type="neXtProt" id="NX_Q14872"/>
<dbReference type="OpenTargets" id="ENSG00000188786"/>
<dbReference type="PharmGKB" id="PA31235"/>
<dbReference type="VEuPathDB" id="HostDB:ENSG00000188786"/>
<dbReference type="eggNOG" id="KOG1721">
    <property type="taxonomic scope" value="Eukaryota"/>
</dbReference>
<dbReference type="GeneTree" id="ENSGT00940000157291"/>
<dbReference type="HOGENOM" id="CLU_026685_0_0_1"/>
<dbReference type="InParanoid" id="Q14872"/>
<dbReference type="OMA" id="KGHLYNA"/>
<dbReference type="OrthoDB" id="6145499at2759"/>
<dbReference type="PAN-GO" id="Q14872">
    <property type="GO annotations" value="5 GO annotations based on evolutionary models"/>
</dbReference>
<dbReference type="PhylomeDB" id="Q14872"/>
<dbReference type="TreeFam" id="TF106493"/>
<dbReference type="PathwayCommons" id="Q14872"/>
<dbReference type="Reactome" id="R-HSA-1989781">
    <property type="pathway name" value="PPARA activates gene expression"/>
</dbReference>
<dbReference type="Reactome" id="R-HSA-2426168">
    <property type="pathway name" value="Activation of gene expression by SREBF (SREBP)"/>
</dbReference>
<dbReference type="Reactome" id="R-HSA-5660489">
    <property type="pathway name" value="MTF1 activates gene expression"/>
</dbReference>
<dbReference type="SignaLink" id="Q14872"/>
<dbReference type="SIGNOR" id="Q14872"/>
<dbReference type="BioGRID-ORCS" id="4520">
    <property type="hits" value="63 hits in 1184 CRISPR screens"/>
</dbReference>
<dbReference type="ChiTaRS" id="MTF1">
    <property type="organism name" value="human"/>
</dbReference>
<dbReference type="GeneWiki" id="MTF1"/>
<dbReference type="GenomeRNAi" id="4520"/>
<dbReference type="Pharos" id="Q14872">
    <property type="development level" value="Tbio"/>
</dbReference>
<dbReference type="PRO" id="PR:Q14872"/>
<dbReference type="Proteomes" id="UP000005640">
    <property type="component" value="Chromosome 1"/>
</dbReference>
<dbReference type="RNAct" id="Q14872">
    <property type="molecule type" value="protein"/>
</dbReference>
<dbReference type="Bgee" id="ENSG00000188786">
    <property type="expression patterns" value="Expressed in secondary oocyte and 206 other cell types or tissues"/>
</dbReference>
<dbReference type="GO" id="GO:0005737">
    <property type="term" value="C:cytoplasm"/>
    <property type="evidence" value="ECO:0007669"/>
    <property type="project" value="UniProtKB-SubCell"/>
</dbReference>
<dbReference type="GO" id="GO:0005654">
    <property type="term" value="C:nucleoplasm"/>
    <property type="evidence" value="ECO:0000314"/>
    <property type="project" value="HPA"/>
</dbReference>
<dbReference type="GO" id="GO:0005634">
    <property type="term" value="C:nucleus"/>
    <property type="evidence" value="ECO:0000318"/>
    <property type="project" value="GO_Central"/>
</dbReference>
<dbReference type="GO" id="GO:0000987">
    <property type="term" value="F:cis-regulatory region sequence-specific DNA binding"/>
    <property type="evidence" value="ECO:0000314"/>
    <property type="project" value="UniProtKB"/>
</dbReference>
<dbReference type="GO" id="GO:0003677">
    <property type="term" value="F:DNA binding"/>
    <property type="evidence" value="ECO:0000304"/>
    <property type="project" value="ProtInc"/>
</dbReference>
<dbReference type="GO" id="GO:0001228">
    <property type="term" value="F:DNA-binding transcription activator activity, RNA polymerase II-specific"/>
    <property type="evidence" value="ECO:0000314"/>
    <property type="project" value="NTNU_SB"/>
</dbReference>
<dbReference type="GO" id="GO:0003700">
    <property type="term" value="F:DNA-binding transcription factor activity"/>
    <property type="evidence" value="ECO:0000304"/>
    <property type="project" value="ProtInc"/>
</dbReference>
<dbReference type="GO" id="GO:0035035">
    <property type="term" value="F:histone acetyltransferase binding"/>
    <property type="evidence" value="ECO:0007669"/>
    <property type="project" value="Ensembl"/>
</dbReference>
<dbReference type="GO" id="GO:0000978">
    <property type="term" value="F:RNA polymerase II cis-regulatory region sequence-specific DNA binding"/>
    <property type="evidence" value="ECO:0000314"/>
    <property type="project" value="NTNU_SB"/>
</dbReference>
<dbReference type="GO" id="GO:1990837">
    <property type="term" value="F:sequence-specific double-stranded DNA binding"/>
    <property type="evidence" value="ECO:0000314"/>
    <property type="project" value="ARUK-UCL"/>
</dbReference>
<dbReference type="GO" id="GO:0008270">
    <property type="term" value="F:zinc ion binding"/>
    <property type="evidence" value="ECO:0007669"/>
    <property type="project" value="UniProtKB-KW"/>
</dbReference>
<dbReference type="GO" id="GO:1990079">
    <property type="term" value="P:cartilage homeostasis"/>
    <property type="evidence" value="ECO:0007669"/>
    <property type="project" value="Ensembl"/>
</dbReference>
<dbReference type="GO" id="GO:0071294">
    <property type="term" value="P:cellular response to zinc ion"/>
    <property type="evidence" value="ECO:0007669"/>
    <property type="project" value="Ensembl"/>
</dbReference>
<dbReference type="GO" id="GO:0007417">
    <property type="term" value="P:central nervous system development"/>
    <property type="evidence" value="ECO:0000318"/>
    <property type="project" value="GO_Central"/>
</dbReference>
<dbReference type="GO" id="GO:0006351">
    <property type="term" value="P:DNA-templated transcription"/>
    <property type="evidence" value="ECO:0007669"/>
    <property type="project" value="Ensembl"/>
</dbReference>
<dbReference type="GO" id="GO:0045944">
    <property type="term" value="P:positive regulation of transcription by RNA polymerase II"/>
    <property type="evidence" value="ECO:0000314"/>
    <property type="project" value="NTNU_SB"/>
</dbReference>
<dbReference type="GO" id="GO:0006357">
    <property type="term" value="P:regulation of transcription by RNA polymerase II"/>
    <property type="evidence" value="ECO:0000304"/>
    <property type="project" value="ProtInc"/>
</dbReference>
<dbReference type="GO" id="GO:0046686">
    <property type="term" value="P:response to cadmium ion"/>
    <property type="evidence" value="ECO:0007669"/>
    <property type="project" value="Ensembl"/>
</dbReference>
<dbReference type="GO" id="GO:0010038">
    <property type="term" value="P:response to metal ion"/>
    <property type="evidence" value="ECO:0000304"/>
    <property type="project" value="ProtInc"/>
</dbReference>
<dbReference type="GO" id="GO:0006979">
    <property type="term" value="P:response to oxidative stress"/>
    <property type="evidence" value="ECO:0007669"/>
    <property type="project" value="Ensembl"/>
</dbReference>
<dbReference type="FunFam" id="3.30.160.60:FF:000370">
    <property type="entry name" value="Metal regulatory transcription factor 1"/>
    <property type="match status" value="1"/>
</dbReference>
<dbReference type="FunFam" id="3.30.160.60:FF:000397">
    <property type="entry name" value="Metal regulatory transcription factor 1"/>
    <property type="match status" value="1"/>
</dbReference>
<dbReference type="FunFam" id="3.30.160.60:FF:002197">
    <property type="entry name" value="Metal regulatory transcription factor 1"/>
    <property type="match status" value="1"/>
</dbReference>
<dbReference type="FunFam" id="3.30.160.60:FF:000199">
    <property type="entry name" value="metal regulatory transcription factor 1"/>
    <property type="match status" value="1"/>
</dbReference>
<dbReference type="FunFam" id="3.30.160.60:FF:000349">
    <property type="entry name" value="metal regulatory transcription factor 1"/>
    <property type="match status" value="1"/>
</dbReference>
<dbReference type="FunFam" id="3.30.160.60:FF:000072">
    <property type="entry name" value="zinc finger protein 143 isoform X1"/>
    <property type="match status" value="1"/>
</dbReference>
<dbReference type="Gene3D" id="3.30.160.60">
    <property type="entry name" value="Classic Zinc Finger"/>
    <property type="match status" value="6"/>
</dbReference>
<dbReference type="InterPro" id="IPR051061">
    <property type="entry name" value="Zinc_finger_trans_reg"/>
</dbReference>
<dbReference type="InterPro" id="IPR036236">
    <property type="entry name" value="Znf_C2H2_sf"/>
</dbReference>
<dbReference type="InterPro" id="IPR013087">
    <property type="entry name" value="Znf_C2H2_type"/>
</dbReference>
<dbReference type="PANTHER" id="PTHR46179:SF25">
    <property type="entry name" value="METAL RESPONSE ELEMENT-BINDING TRANSCRIPTION FACTOR-1, ISOFORM C"/>
    <property type="match status" value="1"/>
</dbReference>
<dbReference type="PANTHER" id="PTHR46179">
    <property type="entry name" value="ZINC FINGER PROTEIN"/>
    <property type="match status" value="1"/>
</dbReference>
<dbReference type="Pfam" id="PF00096">
    <property type="entry name" value="zf-C2H2"/>
    <property type="match status" value="6"/>
</dbReference>
<dbReference type="SMART" id="SM00355">
    <property type="entry name" value="ZnF_C2H2"/>
    <property type="match status" value="6"/>
</dbReference>
<dbReference type="SUPFAM" id="SSF57667">
    <property type="entry name" value="beta-beta-alpha zinc fingers"/>
    <property type="match status" value="4"/>
</dbReference>
<dbReference type="PROSITE" id="PS00028">
    <property type="entry name" value="ZINC_FINGER_C2H2_1"/>
    <property type="match status" value="6"/>
</dbReference>
<dbReference type="PROSITE" id="PS50157">
    <property type="entry name" value="ZINC_FINGER_C2H2_2"/>
    <property type="match status" value="6"/>
</dbReference>
<proteinExistence type="evidence at protein level"/>
<protein>
    <recommendedName>
        <fullName>Metal regulatory transcription factor 1</fullName>
    </recommendedName>
    <alternativeName>
        <fullName>MRE-binding transcription factor</fullName>
    </alternativeName>
    <alternativeName>
        <fullName>Transcription factor MTF-1</fullName>
    </alternativeName>
</protein>
<reference key="1">
    <citation type="journal article" date="1994" name="Nucleic Acids Res.">
        <title>Cloning, chromosomal mapping and characterization of the human metal-regulatory transcription factor MTF-1.</title>
        <authorList>
            <person name="Brugnera E."/>
            <person name="Georgiev O."/>
            <person name="Radtke F."/>
            <person name="Heuchel R."/>
            <person name="Baker E."/>
            <person name="Sutherland G."/>
            <person name="Schaffner W."/>
        </authorList>
    </citation>
    <scope>NUCLEOTIDE SEQUENCE [MRNA]</scope>
    <scope>FUNCTION</scope>
    <scope>SUBCELLULAR LOCATION</scope>
    <source>
        <tissue>Liver</tissue>
    </source>
</reference>
<reference key="2">
    <citation type="journal article" date="2004" name="Nat. Genet.">
        <title>Complete sequencing and characterization of 21,243 full-length human cDNAs.</title>
        <authorList>
            <person name="Ota T."/>
            <person name="Suzuki Y."/>
            <person name="Nishikawa T."/>
            <person name="Otsuki T."/>
            <person name="Sugiyama T."/>
            <person name="Irie R."/>
            <person name="Wakamatsu A."/>
            <person name="Hayashi K."/>
            <person name="Sato H."/>
            <person name="Nagai K."/>
            <person name="Kimura K."/>
            <person name="Makita H."/>
            <person name="Sekine M."/>
            <person name="Obayashi M."/>
            <person name="Nishi T."/>
            <person name="Shibahara T."/>
            <person name="Tanaka T."/>
            <person name="Ishii S."/>
            <person name="Yamamoto J."/>
            <person name="Saito K."/>
            <person name="Kawai Y."/>
            <person name="Isono Y."/>
            <person name="Nakamura Y."/>
            <person name="Nagahari K."/>
            <person name="Murakami K."/>
            <person name="Yasuda T."/>
            <person name="Iwayanagi T."/>
            <person name="Wagatsuma M."/>
            <person name="Shiratori A."/>
            <person name="Sudo H."/>
            <person name="Hosoiri T."/>
            <person name="Kaku Y."/>
            <person name="Kodaira H."/>
            <person name="Kondo H."/>
            <person name="Sugawara M."/>
            <person name="Takahashi M."/>
            <person name="Kanda K."/>
            <person name="Yokoi T."/>
            <person name="Furuya T."/>
            <person name="Kikkawa E."/>
            <person name="Omura Y."/>
            <person name="Abe K."/>
            <person name="Kamihara K."/>
            <person name="Katsuta N."/>
            <person name="Sato K."/>
            <person name="Tanikawa M."/>
            <person name="Yamazaki M."/>
            <person name="Ninomiya K."/>
            <person name="Ishibashi T."/>
            <person name="Yamashita H."/>
            <person name="Murakawa K."/>
            <person name="Fujimori K."/>
            <person name="Tanai H."/>
            <person name="Kimata M."/>
            <person name="Watanabe M."/>
            <person name="Hiraoka S."/>
            <person name="Chiba Y."/>
            <person name="Ishida S."/>
            <person name="Ono Y."/>
            <person name="Takiguchi S."/>
            <person name="Watanabe S."/>
            <person name="Yosida M."/>
            <person name="Hotuta T."/>
            <person name="Kusano J."/>
            <person name="Kanehori K."/>
            <person name="Takahashi-Fujii A."/>
            <person name="Hara H."/>
            <person name="Tanase T.-O."/>
            <person name="Nomura Y."/>
            <person name="Togiya S."/>
            <person name="Komai F."/>
            <person name="Hara R."/>
            <person name="Takeuchi K."/>
            <person name="Arita M."/>
            <person name="Imose N."/>
            <person name="Musashino K."/>
            <person name="Yuuki H."/>
            <person name="Oshima A."/>
            <person name="Sasaki N."/>
            <person name="Aotsuka S."/>
            <person name="Yoshikawa Y."/>
            <person name="Matsunawa H."/>
            <person name="Ichihara T."/>
            <person name="Shiohata N."/>
            <person name="Sano S."/>
            <person name="Moriya S."/>
            <person name="Momiyama H."/>
            <person name="Satoh N."/>
            <person name="Takami S."/>
            <person name="Terashima Y."/>
            <person name="Suzuki O."/>
            <person name="Nakagawa S."/>
            <person name="Senoh A."/>
            <person name="Mizoguchi H."/>
            <person name="Goto Y."/>
            <person name="Shimizu F."/>
            <person name="Wakebe H."/>
            <person name="Hishigaki H."/>
            <person name="Watanabe T."/>
            <person name="Sugiyama A."/>
            <person name="Takemoto M."/>
            <person name="Kawakami B."/>
            <person name="Yamazaki M."/>
            <person name="Watanabe K."/>
            <person name="Kumagai A."/>
            <person name="Itakura S."/>
            <person name="Fukuzumi Y."/>
            <person name="Fujimori Y."/>
            <person name="Komiyama M."/>
            <person name="Tashiro H."/>
            <person name="Tanigami A."/>
            <person name="Fujiwara T."/>
            <person name="Ono T."/>
            <person name="Yamada K."/>
            <person name="Fujii Y."/>
            <person name="Ozaki K."/>
            <person name="Hirao M."/>
            <person name="Ohmori Y."/>
            <person name="Kawabata A."/>
            <person name="Hikiji T."/>
            <person name="Kobatake N."/>
            <person name="Inagaki H."/>
            <person name="Ikema Y."/>
            <person name="Okamoto S."/>
            <person name="Okitani R."/>
            <person name="Kawakami T."/>
            <person name="Noguchi S."/>
            <person name="Itoh T."/>
            <person name="Shigeta K."/>
            <person name="Senba T."/>
            <person name="Matsumura K."/>
            <person name="Nakajima Y."/>
            <person name="Mizuno T."/>
            <person name="Morinaga M."/>
            <person name="Sasaki M."/>
            <person name="Togashi T."/>
            <person name="Oyama M."/>
            <person name="Hata H."/>
            <person name="Watanabe M."/>
            <person name="Komatsu T."/>
            <person name="Mizushima-Sugano J."/>
            <person name="Satoh T."/>
            <person name="Shirai Y."/>
            <person name="Takahashi Y."/>
            <person name="Nakagawa K."/>
            <person name="Okumura K."/>
            <person name="Nagase T."/>
            <person name="Nomura N."/>
            <person name="Kikuchi H."/>
            <person name="Masuho Y."/>
            <person name="Yamashita R."/>
            <person name="Nakai K."/>
            <person name="Yada T."/>
            <person name="Nakamura Y."/>
            <person name="Ohara O."/>
            <person name="Isogai T."/>
            <person name="Sugano S."/>
        </authorList>
    </citation>
    <scope>NUCLEOTIDE SEQUENCE [LARGE SCALE MRNA]</scope>
</reference>
<reference key="3">
    <citation type="journal article" date="2006" name="Nature">
        <title>The DNA sequence and biological annotation of human chromosome 1.</title>
        <authorList>
            <person name="Gregory S.G."/>
            <person name="Barlow K.F."/>
            <person name="McLay K.E."/>
            <person name="Kaul R."/>
            <person name="Swarbreck D."/>
            <person name="Dunham A."/>
            <person name="Scott C.E."/>
            <person name="Howe K.L."/>
            <person name="Woodfine K."/>
            <person name="Spencer C.C.A."/>
            <person name="Jones M.C."/>
            <person name="Gillson C."/>
            <person name="Searle S."/>
            <person name="Zhou Y."/>
            <person name="Kokocinski F."/>
            <person name="McDonald L."/>
            <person name="Evans R."/>
            <person name="Phillips K."/>
            <person name="Atkinson A."/>
            <person name="Cooper R."/>
            <person name="Jones C."/>
            <person name="Hall R.E."/>
            <person name="Andrews T.D."/>
            <person name="Lloyd C."/>
            <person name="Ainscough R."/>
            <person name="Almeida J.P."/>
            <person name="Ambrose K.D."/>
            <person name="Anderson F."/>
            <person name="Andrew R.W."/>
            <person name="Ashwell R.I.S."/>
            <person name="Aubin K."/>
            <person name="Babbage A.K."/>
            <person name="Bagguley C.L."/>
            <person name="Bailey J."/>
            <person name="Beasley H."/>
            <person name="Bethel G."/>
            <person name="Bird C.P."/>
            <person name="Bray-Allen S."/>
            <person name="Brown J.Y."/>
            <person name="Brown A.J."/>
            <person name="Buckley D."/>
            <person name="Burton J."/>
            <person name="Bye J."/>
            <person name="Carder C."/>
            <person name="Chapman J.C."/>
            <person name="Clark S.Y."/>
            <person name="Clarke G."/>
            <person name="Clee C."/>
            <person name="Cobley V."/>
            <person name="Collier R.E."/>
            <person name="Corby N."/>
            <person name="Coville G.J."/>
            <person name="Davies J."/>
            <person name="Deadman R."/>
            <person name="Dunn M."/>
            <person name="Earthrowl M."/>
            <person name="Ellington A.G."/>
            <person name="Errington H."/>
            <person name="Frankish A."/>
            <person name="Frankland J."/>
            <person name="French L."/>
            <person name="Garner P."/>
            <person name="Garnett J."/>
            <person name="Gay L."/>
            <person name="Ghori M.R.J."/>
            <person name="Gibson R."/>
            <person name="Gilby L.M."/>
            <person name="Gillett W."/>
            <person name="Glithero R.J."/>
            <person name="Grafham D.V."/>
            <person name="Griffiths C."/>
            <person name="Griffiths-Jones S."/>
            <person name="Grocock R."/>
            <person name="Hammond S."/>
            <person name="Harrison E.S.I."/>
            <person name="Hart E."/>
            <person name="Haugen E."/>
            <person name="Heath P.D."/>
            <person name="Holmes S."/>
            <person name="Holt K."/>
            <person name="Howden P.J."/>
            <person name="Hunt A.R."/>
            <person name="Hunt S.E."/>
            <person name="Hunter G."/>
            <person name="Isherwood J."/>
            <person name="James R."/>
            <person name="Johnson C."/>
            <person name="Johnson D."/>
            <person name="Joy A."/>
            <person name="Kay M."/>
            <person name="Kershaw J.K."/>
            <person name="Kibukawa M."/>
            <person name="Kimberley A.M."/>
            <person name="King A."/>
            <person name="Knights A.J."/>
            <person name="Lad H."/>
            <person name="Laird G."/>
            <person name="Lawlor S."/>
            <person name="Leongamornlert D.A."/>
            <person name="Lloyd D.M."/>
            <person name="Loveland J."/>
            <person name="Lovell J."/>
            <person name="Lush M.J."/>
            <person name="Lyne R."/>
            <person name="Martin S."/>
            <person name="Mashreghi-Mohammadi M."/>
            <person name="Matthews L."/>
            <person name="Matthews N.S.W."/>
            <person name="McLaren S."/>
            <person name="Milne S."/>
            <person name="Mistry S."/>
            <person name="Moore M.J.F."/>
            <person name="Nickerson T."/>
            <person name="O'Dell C.N."/>
            <person name="Oliver K."/>
            <person name="Palmeiri A."/>
            <person name="Palmer S.A."/>
            <person name="Parker A."/>
            <person name="Patel D."/>
            <person name="Pearce A.V."/>
            <person name="Peck A.I."/>
            <person name="Pelan S."/>
            <person name="Phelps K."/>
            <person name="Phillimore B.J."/>
            <person name="Plumb R."/>
            <person name="Rajan J."/>
            <person name="Raymond C."/>
            <person name="Rouse G."/>
            <person name="Saenphimmachak C."/>
            <person name="Sehra H.K."/>
            <person name="Sheridan E."/>
            <person name="Shownkeen R."/>
            <person name="Sims S."/>
            <person name="Skuce C.D."/>
            <person name="Smith M."/>
            <person name="Steward C."/>
            <person name="Subramanian S."/>
            <person name="Sycamore N."/>
            <person name="Tracey A."/>
            <person name="Tromans A."/>
            <person name="Van Helmond Z."/>
            <person name="Wall M."/>
            <person name="Wallis J.M."/>
            <person name="White S."/>
            <person name="Whitehead S.L."/>
            <person name="Wilkinson J.E."/>
            <person name="Willey D.L."/>
            <person name="Williams H."/>
            <person name="Wilming L."/>
            <person name="Wray P.W."/>
            <person name="Wu Z."/>
            <person name="Coulson A."/>
            <person name="Vaudin M."/>
            <person name="Sulston J.E."/>
            <person name="Durbin R.M."/>
            <person name="Hubbard T."/>
            <person name="Wooster R."/>
            <person name="Dunham I."/>
            <person name="Carter N.P."/>
            <person name="McVean G."/>
            <person name="Ross M.T."/>
            <person name="Harrow J."/>
            <person name="Olson M.V."/>
            <person name="Beck S."/>
            <person name="Rogers J."/>
            <person name="Bentley D.R."/>
        </authorList>
    </citation>
    <scope>NUCLEOTIDE SEQUENCE [LARGE SCALE GENOMIC DNA]</scope>
</reference>
<reference key="4">
    <citation type="submission" date="2005-09" db="EMBL/GenBank/DDBJ databases">
        <authorList>
            <person name="Mural R.J."/>
            <person name="Istrail S."/>
            <person name="Sutton G.G."/>
            <person name="Florea L."/>
            <person name="Halpern A.L."/>
            <person name="Mobarry C.M."/>
            <person name="Lippert R."/>
            <person name="Walenz B."/>
            <person name="Shatkay H."/>
            <person name="Dew I."/>
            <person name="Miller J.R."/>
            <person name="Flanigan M.J."/>
            <person name="Edwards N.J."/>
            <person name="Bolanos R."/>
            <person name="Fasulo D."/>
            <person name="Halldorsson B.V."/>
            <person name="Hannenhalli S."/>
            <person name="Turner R."/>
            <person name="Yooseph S."/>
            <person name="Lu F."/>
            <person name="Nusskern D.R."/>
            <person name="Shue B.C."/>
            <person name="Zheng X.H."/>
            <person name="Zhong F."/>
            <person name="Delcher A.L."/>
            <person name="Huson D.H."/>
            <person name="Kravitz S.A."/>
            <person name="Mouchard L."/>
            <person name="Reinert K."/>
            <person name="Remington K.A."/>
            <person name="Clark A.G."/>
            <person name="Waterman M.S."/>
            <person name="Eichler E.E."/>
            <person name="Adams M.D."/>
            <person name="Hunkapiller M.W."/>
            <person name="Myers E.W."/>
            <person name="Venter J.C."/>
        </authorList>
    </citation>
    <scope>NUCLEOTIDE SEQUENCE [LARGE SCALE GENOMIC DNA]</scope>
</reference>
<reference key="5">
    <citation type="journal article" date="2004" name="Genome Res.">
        <title>The status, quality, and expansion of the NIH full-length cDNA project: the Mammalian Gene Collection (MGC).</title>
        <authorList>
            <consortium name="The MGC Project Team"/>
        </authorList>
    </citation>
    <scope>NUCLEOTIDE SEQUENCE [LARGE SCALE MRNA]</scope>
    <source>
        <tissue>Muscle</tissue>
    </source>
</reference>
<reference key="6">
    <citation type="journal article" date="2013" name="J. Proteome Res.">
        <title>Toward a comprehensive characterization of a human cancer cell phosphoproteome.</title>
        <authorList>
            <person name="Zhou H."/>
            <person name="Di Palma S."/>
            <person name="Preisinger C."/>
            <person name="Peng M."/>
            <person name="Polat A.N."/>
            <person name="Heck A.J."/>
            <person name="Mohammed S."/>
        </authorList>
    </citation>
    <scope>PHOSPHORYLATION [LARGE SCALE ANALYSIS] AT SER-305</scope>
    <scope>IDENTIFICATION BY MASS SPECTROMETRY [LARGE SCALE ANALYSIS]</scope>
    <source>
        <tissue>Erythroleukemia</tissue>
    </source>
</reference>
<accession>Q14872</accession>
<accession>B2RAK6</accession>
<accession>Q96CB1</accession>
<sequence>MGEHSPDNNIIYFEAEEDELTPDDKMLRFVDKNGLVPSSSGTVYDRTTVLIEQDPGTLEDEDDDGQCGEHLPFLVGGEEGFHLIDHEAMSQGYVQHIISPDQIHLTINPGSTPMPRNIEGATLTLQSECPETKRKEVKRYQCTFEGCPRTYSTAGNLRTHQKTHRGEYTFVCNQEGCGKAFLTSYSLRIHVRVHTKEKPFECDVQGCEKAFNTLYRLKAHQRLHTGKTFNCESEGCSKYFTTLSDLRKHIRTHTGEKPFRCDHDGCGKAFAASHHLKTHVRTHTGERPFFCPSNGCEKTFSTQYSLKSHMKGHDNKGHSYNALPQHNGSEDTNHSLCLSDLSLLSTDSELRENSSTTQGQDLSTISPAIIFESMFQNSDDTAIQEDPQQTASLTESFNGDAESVSDVPPSTGNSASLSLPLVLQPGLSEPPQPLLPASAPSAPPPAPSLGPGSQQAAFGNPPALLQPPEVPVPHSTQFAANHQEFLPHPQAPQPIVPGLSVVAGASASAAAVASAVAAPAPPQSTTEPLPAMVQTLPLGANSVLTNNPTITITPTPNTAILQSSLVMGEQNLQWILNGATSSPQNQEQIQQASKVEKVFFTTAVPVASSPGSSVQQIGLSVPVIIIKQEEACQCQCACRDSAKERASSRRKGCSSPPPPEPSPQAPDGPSLQLPAQTFSSAPVPGSSSSTLPSSCEQSRQAETPSDPQTETLSAMDVSEFLSLQSLDTPSNLIPIEALLQGEEEMGLTSSFSK</sequence>
<evidence type="ECO:0000250" key="1">
    <source>
        <dbReference type="UniProtKB" id="Q07243"/>
    </source>
</evidence>
<evidence type="ECO:0000255" key="2"/>
<evidence type="ECO:0000255" key="3">
    <source>
        <dbReference type="PROSITE-ProRule" id="PRU00042"/>
    </source>
</evidence>
<evidence type="ECO:0000256" key="4">
    <source>
        <dbReference type="SAM" id="MobiDB-lite"/>
    </source>
</evidence>
<evidence type="ECO:0000269" key="5">
    <source>
    </source>
</evidence>
<evidence type="ECO:0000305" key="6"/>
<evidence type="ECO:0007744" key="7">
    <source>
    </source>
</evidence>
<gene>
    <name type="primary">MTF1</name>
</gene>